<dbReference type="EMBL" id="AB007649">
    <property type="protein sequence ID" value="BAB08817.1"/>
    <property type="molecule type" value="Genomic_DNA"/>
</dbReference>
<dbReference type="EMBL" id="CP002688">
    <property type="protein sequence ID" value="AED97762.2"/>
    <property type="molecule type" value="Genomic_DNA"/>
</dbReference>
<dbReference type="EMBL" id="AK118351">
    <property type="protein sequence ID" value="BAC42965.1"/>
    <property type="status" value="ALT_FRAME"/>
    <property type="molecule type" value="mRNA"/>
</dbReference>
<dbReference type="RefSeq" id="NP_201157.4">
    <property type="nucleotide sequence ID" value="NM_125747.4"/>
</dbReference>
<dbReference type="BioGRID" id="21713">
    <property type="interactions" value="6"/>
</dbReference>
<dbReference type="FunCoup" id="Q9FMV0">
    <property type="interactions" value="429"/>
</dbReference>
<dbReference type="STRING" id="3702.Q9FMV0"/>
<dbReference type="PaxDb" id="3702-AT5G63520.1"/>
<dbReference type="ProteomicsDB" id="222439"/>
<dbReference type="EnsemblPlants" id="AT5G63520.1">
    <property type="protein sequence ID" value="AT5G63520.1"/>
    <property type="gene ID" value="AT5G63520"/>
</dbReference>
<dbReference type="GeneID" id="836471"/>
<dbReference type="Gramene" id="AT5G63520.1">
    <property type="protein sequence ID" value="AT5G63520.1"/>
    <property type="gene ID" value="AT5G63520"/>
</dbReference>
<dbReference type="KEGG" id="ath:AT5G63520"/>
<dbReference type="Araport" id="AT5G63520"/>
<dbReference type="TAIR" id="AT5G63520"/>
<dbReference type="eggNOG" id="ENOG502QT6J">
    <property type="taxonomic scope" value="Eukaryota"/>
</dbReference>
<dbReference type="HOGENOM" id="CLU_038429_0_0_1"/>
<dbReference type="InParanoid" id="Q9FMV0"/>
<dbReference type="OMA" id="PRTCIAY"/>
<dbReference type="PhylomeDB" id="Q9FMV0"/>
<dbReference type="PRO" id="PR:Q9FMV0"/>
<dbReference type="Proteomes" id="UP000006548">
    <property type="component" value="Chromosome 5"/>
</dbReference>
<dbReference type="ExpressionAtlas" id="Q9FMV0">
    <property type="expression patterns" value="baseline and differential"/>
</dbReference>
<dbReference type="InterPro" id="IPR036047">
    <property type="entry name" value="F-box-like_dom_sf"/>
</dbReference>
<dbReference type="InterPro" id="IPR001810">
    <property type="entry name" value="F-box_dom"/>
</dbReference>
<dbReference type="InterPro" id="IPR019494">
    <property type="entry name" value="FIST_C"/>
</dbReference>
<dbReference type="PANTHER" id="PTHR14939">
    <property type="entry name" value="F-BOX ONLY PROTEIN 22"/>
    <property type="match status" value="1"/>
</dbReference>
<dbReference type="PANTHER" id="PTHR14939:SF5">
    <property type="entry name" value="F-BOX ONLY PROTEIN 22"/>
    <property type="match status" value="1"/>
</dbReference>
<dbReference type="Pfam" id="PF00646">
    <property type="entry name" value="F-box"/>
    <property type="match status" value="1"/>
</dbReference>
<dbReference type="SMART" id="SM01204">
    <property type="entry name" value="FIST_C"/>
    <property type="match status" value="1"/>
</dbReference>
<dbReference type="SUPFAM" id="SSF81383">
    <property type="entry name" value="F-box domain"/>
    <property type="match status" value="1"/>
</dbReference>
<proteinExistence type="evidence at transcript level"/>
<protein>
    <recommendedName>
        <fullName>F-box/LRR-repeat protein At5g63520</fullName>
    </recommendedName>
</protein>
<sequence>MAEVSLTKKEMTTKGKSENSKKMKTDMADMVPIAAMNEDLLHNILLRLPAKSFAFASCVNRFWSSVCNRILSRPKMISAFSRNPDQLRAGEEVLDKVLSEPIRPQFVIANITCGNMEETLTLITERVGSRVPIIVSVVTGILGKEACNDKAGEVRLHSTSDDELFDVANFAILLTIGYLPGMKVDIIPVIQAKGESGAEMEDKFVMDIRNYMSMVSGHAAAPACLILFAEDTHATEPVLHKLDYAMPAETVIVGGQIGEFLHKRGNEPRNVQLQKDDIRVLAGLIFARDRHRPAQAERIQFDTAISNGMSSVDLRYKAANVNVSLGPSCPSTLLTAKRRGEAEVLDGDQILDDIDNILENYIWENDSYLGVIKRRKYSIGLEEKPKIMSSLVFHQVNGSDDQDLLVDGAGIKTGDQFQVYLPDLKVAEAALNDVSAQLRNLKSKPNKPEVVGGFAFVGSCRGDSFFGCPNADSSPFLENFPELPFGGIFCDGEIGRSLILEEGEEKKEVSIQRFLHVYSSVYLIVSYTS</sequence>
<organism>
    <name type="scientific">Arabidopsis thaliana</name>
    <name type="common">Mouse-ear cress</name>
    <dbReference type="NCBI Taxonomy" id="3702"/>
    <lineage>
        <taxon>Eukaryota</taxon>
        <taxon>Viridiplantae</taxon>
        <taxon>Streptophyta</taxon>
        <taxon>Embryophyta</taxon>
        <taxon>Tracheophyta</taxon>
        <taxon>Spermatophyta</taxon>
        <taxon>Magnoliopsida</taxon>
        <taxon>eudicotyledons</taxon>
        <taxon>Gunneridae</taxon>
        <taxon>Pentapetalae</taxon>
        <taxon>rosids</taxon>
        <taxon>malvids</taxon>
        <taxon>Brassicales</taxon>
        <taxon>Brassicaceae</taxon>
        <taxon>Camelineae</taxon>
        <taxon>Arabidopsis</taxon>
    </lineage>
</organism>
<keyword id="KW-0433">Leucine-rich repeat</keyword>
<keyword id="KW-1185">Reference proteome</keyword>
<keyword id="KW-0677">Repeat</keyword>
<feature type="chain" id="PRO_0000281988" description="F-box/LRR-repeat protein At5g63520">
    <location>
        <begin position="1"/>
        <end position="529"/>
    </location>
</feature>
<feature type="domain" description="F-box">
    <location>
        <begin position="31"/>
        <end position="78"/>
    </location>
</feature>
<feature type="repeat" description="LRR 1">
    <location>
        <begin position="265"/>
        <end position="288"/>
    </location>
</feature>
<feature type="repeat" description="LRR 2">
    <location>
        <begin position="418"/>
        <end position="441"/>
    </location>
</feature>
<feature type="region of interest" description="Disordered" evidence="1">
    <location>
        <begin position="1"/>
        <end position="22"/>
    </location>
</feature>
<reference key="1">
    <citation type="journal article" date="1997" name="DNA Res.">
        <title>Structural analysis of Arabidopsis thaliana chromosome 5. III. Sequence features of the regions of 1,191,918 bp covered by seventeen physically assigned P1 clones.</title>
        <authorList>
            <person name="Nakamura Y."/>
            <person name="Sato S."/>
            <person name="Kaneko T."/>
            <person name="Kotani H."/>
            <person name="Asamizu E."/>
            <person name="Miyajima N."/>
            <person name="Tabata S."/>
        </authorList>
    </citation>
    <scope>NUCLEOTIDE SEQUENCE [LARGE SCALE GENOMIC DNA]</scope>
    <source>
        <strain>cv. Columbia</strain>
    </source>
</reference>
<reference key="2">
    <citation type="journal article" date="2017" name="Plant J.">
        <title>Araport11: a complete reannotation of the Arabidopsis thaliana reference genome.</title>
        <authorList>
            <person name="Cheng C.Y."/>
            <person name="Krishnakumar V."/>
            <person name="Chan A.P."/>
            <person name="Thibaud-Nissen F."/>
            <person name="Schobel S."/>
            <person name="Town C.D."/>
        </authorList>
    </citation>
    <scope>GENOME REANNOTATION</scope>
    <source>
        <strain>cv. Columbia</strain>
    </source>
</reference>
<reference key="3">
    <citation type="journal article" date="2002" name="Science">
        <title>Functional annotation of a full-length Arabidopsis cDNA collection.</title>
        <authorList>
            <person name="Seki M."/>
            <person name="Narusaka M."/>
            <person name="Kamiya A."/>
            <person name="Ishida J."/>
            <person name="Satou M."/>
            <person name="Sakurai T."/>
            <person name="Nakajima M."/>
            <person name="Enju A."/>
            <person name="Akiyama K."/>
            <person name="Oono Y."/>
            <person name="Muramatsu M."/>
            <person name="Hayashizaki Y."/>
            <person name="Kawai J."/>
            <person name="Carninci P."/>
            <person name="Itoh M."/>
            <person name="Ishii Y."/>
            <person name="Arakawa T."/>
            <person name="Shibata K."/>
            <person name="Shinagawa A."/>
            <person name="Shinozaki K."/>
        </authorList>
    </citation>
    <scope>NUCLEOTIDE SEQUENCE [LARGE SCALE MRNA] OF 5-529</scope>
    <source>
        <strain>cv. Columbia</strain>
    </source>
</reference>
<comment type="caution">
    <text evidence="2">It is uncertain whether Met-1 or Met-11 is the initiator.</text>
</comment>
<comment type="sequence caution" evidence="2">
    <conflict type="frameshift">
        <sequence resource="EMBL-CDS" id="BAC42965"/>
    </conflict>
</comment>
<name>FBL91_ARATH</name>
<gene>
    <name type="ordered locus">At5g63520</name>
    <name type="ORF">MLE2.15</name>
</gene>
<accession>Q9FMV0</accession>
<accession>F4KAR0</accession>
<accession>Q8GX97</accession>
<evidence type="ECO:0000256" key="1">
    <source>
        <dbReference type="SAM" id="MobiDB-lite"/>
    </source>
</evidence>
<evidence type="ECO:0000305" key="2"/>